<dbReference type="EC" id="2.4.1.-"/>
<dbReference type="EMBL" id="AC004681">
    <property type="protein sequence ID" value="AAC25944.1"/>
    <property type="molecule type" value="Genomic_DNA"/>
</dbReference>
<dbReference type="EMBL" id="CP002685">
    <property type="protein sequence ID" value="AEC08706.1"/>
    <property type="molecule type" value="Genomic_DNA"/>
</dbReference>
<dbReference type="PIR" id="T02561">
    <property type="entry name" value="T02561"/>
</dbReference>
<dbReference type="SMR" id="O80899"/>
<dbReference type="STRING" id="3702.O80899"/>
<dbReference type="CAZy" id="GT2">
    <property type="family name" value="Glycosyltransferase Family 2"/>
</dbReference>
<dbReference type="iPTMnet" id="O80899"/>
<dbReference type="PaxDb" id="3702-AT2G32620.1"/>
<dbReference type="EnsemblPlants" id="AT2G32620.1">
    <property type="protein sequence ID" value="AT2G32620.1"/>
    <property type="gene ID" value="AT2G32620"/>
</dbReference>
<dbReference type="GeneID" id="817822"/>
<dbReference type="Gramene" id="AT2G32620.1">
    <property type="protein sequence ID" value="AT2G32620.1"/>
    <property type="gene ID" value="AT2G32620"/>
</dbReference>
<dbReference type="KEGG" id="ath:AT2G32620"/>
<dbReference type="Araport" id="AT2G32620"/>
<dbReference type="TAIR" id="AT2G32620">
    <property type="gene designation" value="CSLB02"/>
</dbReference>
<dbReference type="eggNOG" id="ENOG502QTT0">
    <property type="taxonomic scope" value="Eukaryota"/>
</dbReference>
<dbReference type="HOGENOM" id="CLU_001418_3_3_1"/>
<dbReference type="InParanoid" id="O80899"/>
<dbReference type="OMA" id="WENKERL"/>
<dbReference type="PhylomeDB" id="O80899"/>
<dbReference type="BioCyc" id="ARA:AT2G32620-MONOMER"/>
<dbReference type="PRO" id="PR:O80899"/>
<dbReference type="Proteomes" id="UP000006548">
    <property type="component" value="Chromosome 2"/>
</dbReference>
<dbReference type="ExpressionAtlas" id="O80899">
    <property type="expression patterns" value="baseline and differential"/>
</dbReference>
<dbReference type="GO" id="GO:0000139">
    <property type="term" value="C:Golgi membrane"/>
    <property type="evidence" value="ECO:0007669"/>
    <property type="project" value="UniProtKB-SubCell"/>
</dbReference>
<dbReference type="GO" id="GO:0016760">
    <property type="term" value="F:cellulose synthase (UDP-forming) activity"/>
    <property type="evidence" value="ECO:0007669"/>
    <property type="project" value="InterPro"/>
</dbReference>
<dbReference type="GO" id="GO:0071555">
    <property type="term" value="P:cell wall organization"/>
    <property type="evidence" value="ECO:0007669"/>
    <property type="project" value="UniProtKB-KW"/>
</dbReference>
<dbReference type="GO" id="GO:0030244">
    <property type="term" value="P:cellulose biosynthetic process"/>
    <property type="evidence" value="ECO:0007669"/>
    <property type="project" value="InterPro"/>
</dbReference>
<dbReference type="FunFam" id="3.90.550.10:FF:000162">
    <property type="entry name" value="Cellulose synthase-like B6"/>
    <property type="match status" value="1"/>
</dbReference>
<dbReference type="Gene3D" id="3.90.550.10">
    <property type="entry name" value="Spore Coat Polysaccharide Biosynthesis Protein SpsA, Chain A"/>
    <property type="match status" value="1"/>
</dbReference>
<dbReference type="InterPro" id="IPR005150">
    <property type="entry name" value="Cellulose_synth"/>
</dbReference>
<dbReference type="InterPro" id="IPR029044">
    <property type="entry name" value="Nucleotide-diphossugar_trans"/>
</dbReference>
<dbReference type="PANTHER" id="PTHR13301">
    <property type="entry name" value="X-BOX TRANSCRIPTION FACTOR-RELATED"/>
    <property type="match status" value="1"/>
</dbReference>
<dbReference type="Pfam" id="PF03552">
    <property type="entry name" value="Cellulose_synt"/>
    <property type="match status" value="2"/>
</dbReference>
<dbReference type="SUPFAM" id="SSF53448">
    <property type="entry name" value="Nucleotide-diphospho-sugar transferases"/>
    <property type="match status" value="1"/>
</dbReference>
<name>CSLB2_ARATH</name>
<comment type="function">
    <text>Thought to be a Golgi-localized beta-glycan synthase that polymerize the backbones of noncellulosic polysaccharides (hemicelluloses) of plant cell wall.</text>
</comment>
<comment type="subcellular location">
    <subcellularLocation>
        <location evidence="3">Golgi apparatus membrane</location>
        <topology evidence="3">Multi-pass membrane protein</topology>
    </subcellularLocation>
</comment>
<comment type="tissue specificity">
    <text evidence="2">Expressed in young seedlings, primarily in the root vascular tissue.</text>
</comment>
<comment type="similarity">
    <text evidence="3">Belongs to the glycosyltransferase 2 family. Plant cellulose synthase-like B subfamily.</text>
</comment>
<feature type="chain" id="PRO_0000319336" description="Cellulose synthase-like protein B2">
    <location>
        <begin position="1"/>
        <end position="757"/>
    </location>
</feature>
<feature type="transmembrane region" description="Helical" evidence="1">
    <location>
        <begin position="24"/>
        <end position="44"/>
    </location>
</feature>
<feature type="transmembrane region" description="Helical" evidence="1">
    <location>
        <begin position="48"/>
        <end position="68"/>
    </location>
</feature>
<feature type="transmembrane region" description="Helical" evidence="1">
    <location>
        <begin position="533"/>
        <end position="555"/>
    </location>
</feature>
<feature type="transmembrane region" description="Helical" evidence="1">
    <location>
        <begin position="568"/>
        <end position="588"/>
    </location>
</feature>
<feature type="transmembrane region" description="Helical" evidence="1">
    <location>
        <begin position="607"/>
        <end position="627"/>
    </location>
</feature>
<feature type="transmembrane region" description="Helical" evidence="1">
    <location>
        <begin position="672"/>
        <end position="692"/>
    </location>
</feature>
<feature type="transmembrane region" description="Helical" evidence="1">
    <location>
        <begin position="704"/>
        <end position="724"/>
    </location>
</feature>
<feature type="transmembrane region" description="Helical" evidence="1">
    <location>
        <begin position="735"/>
        <end position="755"/>
    </location>
</feature>
<feature type="active site" evidence="1">
    <location>
        <position position="136"/>
    </location>
</feature>
<feature type="active site" evidence="1">
    <location>
        <position position="461"/>
    </location>
</feature>
<accession>O80899</accession>
<keyword id="KW-0961">Cell wall biogenesis/degradation</keyword>
<keyword id="KW-0328">Glycosyltransferase</keyword>
<keyword id="KW-0333">Golgi apparatus</keyword>
<keyword id="KW-0472">Membrane</keyword>
<keyword id="KW-1185">Reference proteome</keyword>
<keyword id="KW-0808">Transferase</keyword>
<keyword id="KW-0812">Transmembrane</keyword>
<keyword id="KW-1133">Transmembrane helix</keyword>
<evidence type="ECO:0000255" key="1"/>
<evidence type="ECO:0000269" key="2">
    <source>
    </source>
</evidence>
<evidence type="ECO:0000305" key="3"/>
<gene>
    <name type="primary">CSLB2</name>
    <name type="ordered locus">At2g32620</name>
    <name type="ORF">T26B15.18</name>
</gene>
<reference key="1">
    <citation type="journal article" date="1999" name="Nature">
        <title>Sequence and analysis of chromosome 2 of the plant Arabidopsis thaliana.</title>
        <authorList>
            <person name="Lin X."/>
            <person name="Kaul S."/>
            <person name="Rounsley S.D."/>
            <person name="Shea T.P."/>
            <person name="Benito M.-I."/>
            <person name="Town C.D."/>
            <person name="Fujii C.Y."/>
            <person name="Mason T.M."/>
            <person name="Bowman C.L."/>
            <person name="Barnstead M.E."/>
            <person name="Feldblyum T.V."/>
            <person name="Buell C.R."/>
            <person name="Ketchum K.A."/>
            <person name="Lee J.J."/>
            <person name="Ronning C.M."/>
            <person name="Koo H.L."/>
            <person name="Moffat K.S."/>
            <person name="Cronin L.A."/>
            <person name="Shen M."/>
            <person name="Pai G."/>
            <person name="Van Aken S."/>
            <person name="Umayam L."/>
            <person name="Tallon L.J."/>
            <person name="Gill J.E."/>
            <person name="Adams M.D."/>
            <person name="Carrera A.J."/>
            <person name="Creasy T.H."/>
            <person name="Goodman H.M."/>
            <person name="Somerville C.R."/>
            <person name="Copenhaver G.P."/>
            <person name="Preuss D."/>
            <person name="Nierman W.C."/>
            <person name="White O."/>
            <person name="Eisen J.A."/>
            <person name="Salzberg S.L."/>
            <person name="Fraser C.M."/>
            <person name="Venter J.C."/>
        </authorList>
    </citation>
    <scope>NUCLEOTIDE SEQUENCE [LARGE SCALE GENOMIC DNA]</scope>
    <source>
        <strain>cv. Columbia</strain>
    </source>
</reference>
<reference key="2">
    <citation type="journal article" date="2017" name="Plant J.">
        <title>Araport11: a complete reannotation of the Arabidopsis thaliana reference genome.</title>
        <authorList>
            <person name="Cheng C.Y."/>
            <person name="Krishnakumar V."/>
            <person name="Chan A.P."/>
            <person name="Thibaud-Nissen F."/>
            <person name="Schobel S."/>
            <person name="Town C.D."/>
        </authorList>
    </citation>
    <scope>GENOME REANNOTATION</scope>
    <source>
        <strain>cv. Columbia</strain>
    </source>
</reference>
<reference key="3">
    <citation type="journal article" date="2000" name="Plant Physiol.">
        <title>The cellulose synthase superfamily.</title>
        <authorList>
            <person name="Richmond T.A."/>
            <person name="Somerville C.R."/>
        </authorList>
    </citation>
    <scope>GENE FAMILY</scope>
    <scope>NOMENCLATURE</scope>
</reference>
<reference key="4">
    <citation type="journal article" date="2001" name="Plant Mol. Biol.">
        <title>Integrative approaches to determining Csl function.</title>
        <authorList>
            <person name="Richmond T.A."/>
            <person name="Somerville C.R."/>
        </authorList>
    </citation>
    <scope>TISSUE SPECIFICITY</scope>
</reference>
<sequence length="757" mass="84261">MADSSCSLPPLYENISYKSYILRAVDLTILGLLFSLLLHRILYMSQNGIIWLVAFLCESCFSFVWLLSTCTKWSPAETKPYPDRLDERVYDLPSVDMFVPTADPVREPPIMVVNTVLSLLAVNYPANKLACYVSDDGCSPLTYFSLKEASKFAKIWVPFCKKYNLKVRAPFRYFLNPFAATEGSEFSRDWEMTKREYEKLCRKVEDATGDSHLLGTDNELEAFSNTKPNDHSTIIKVVWENKGGVGDEKEVPHIVYISREKRPNYLHHYKAGAMNFLARVSGLMTNAPYMLNVDCDMYANEADVVRQAMCIFLQKSQNQNHCAFVQFPQEFYDSNTIKLTVIKSYMGRGIAGIQGPINVGSGCFHSRRVMYGLSPDELEDNGSLSSVATRELLAEDSLSSGFGNSKEMVTSVVEALQRKPNPQNILTNSIEAAQEVGHCDYESQTSWGKTIGWLYDSMSEDMNTSIGIHSRGWTSSYIAPDPPAFLGSMPPGGLEAMIQQRRWATGSIEVLFNKQSPLLGLFCRKLRFRQRVAYLCVSICVRSIPELIYCLLPAYCLLHNSALFPKGLCLGITMLLAGMHCLYTLWEFMCLGHSIQSWYVSQSFWRIVATSSWLFSIFDIILKLLGLSKNVFLVSKKTMPVETMSGSGIGPSQREDDGPNSGKTEFDGSLYFLPGTFIVLVNLAALVGVFVGLQRSSYSHGGGGSGLGEACACILVVMLFFPFLKGLFAKGKYGIPLSTLSKAGFLAVSFVVFSVGN</sequence>
<organism>
    <name type="scientific">Arabidopsis thaliana</name>
    <name type="common">Mouse-ear cress</name>
    <dbReference type="NCBI Taxonomy" id="3702"/>
    <lineage>
        <taxon>Eukaryota</taxon>
        <taxon>Viridiplantae</taxon>
        <taxon>Streptophyta</taxon>
        <taxon>Embryophyta</taxon>
        <taxon>Tracheophyta</taxon>
        <taxon>Spermatophyta</taxon>
        <taxon>Magnoliopsida</taxon>
        <taxon>eudicotyledons</taxon>
        <taxon>Gunneridae</taxon>
        <taxon>Pentapetalae</taxon>
        <taxon>rosids</taxon>
        <taxon>malvids</taxon>
        <taxon>Brassicales</taxon>
        <taxon>Brassicaceae</taxon>
        <taxon>Camelineae</taxon>
        <taxon>Arabidopsis</taxon>
    </lineage>
</organism>
<protein>
    <recommendedName>
        <fullName>Cellulose synthase-like protein B2</fullName>
        <shortName>AtCslB2</shortName>
        <ecNumber>2.4.1.-</ecNumber>
    </recommendedName>
</protein>
<proteinExistence type="evidence at transcript level"/>